<sequence>MSSNSKLLIDIQTASPAIEAALKKIASSALIKKWIKAATPLSGLLTLRFVNSTEGKKLNAAFRKKHYATNVLTFPYEHSKSALSADIIFCLPVIRKEAKEQGKTVKAHLAHLIVHGCLHAQGFDHEHEKETKKMEKLEVALLKKLGFTDPYLTTQ</sequence>
<keyword id="KW-0963">Cytoplasm</keyword>
<keyword id="KW-0255">Endonuclease</keyword>
<keyword id="KW-0378">Hydrolase</keyword>
<keyword id="KW-0479">Metal-binding</keyword>
<keyword id="KW-0540">Nuclease</keyword>
<keyword id="KW-1185">Reference proteome</keyword>
<keyword id="KW-0690">Ribosome biogenesis</keyword>
<keyword id="KW-0698">rRNA processing</keyword>
<keyword id="KW-0862">Zinc</keyword>
<organism>
    <name type="scientific">Polynucleobacter asymbioticus (strain DSM 18221 / CIP 109841 / QLW-P1DMWA-1)</name>
    <name type="common">Polynucleobacter necessarius subsp. asymbioticus</name>
    <dbReference type="NCBI Taxonomy" id="312153"/>
    <lineage>
        <taxon>Bacteria</taxon>
        <taxon>Pseudomonadati</taxon>
        <taxon>Pseudomonadota</taxon>
        <taxon>Betaproteobacteria</taxon>
        <taxon>Burkholderiales</taxon>
        <taxon>Burkholderiaceae</taxon>
        <taxon>Polynucleobacter</taxon>
    </lineage>
</organism>
<proteinExistence type="inferred from homology"/>
<comment type="function">
    <text evidence="1">Single strand-specific metallo-endoribonuclease involved in late-stage 70S ribosome quality control and in maturation of the 3' terminus of the 16S rRNA.</text>
</comment>
<comment type="cofactor">
    <cofactor evidence="1">
        <name>Zn(2+)</name>
        <dbReference type="ChEBI" id="CHEBI:29105"/>
    </cofactor>
    <text evidence="1">Binds 1 zinc ion.</text>
</comment>
<comment type="subcellular location">
    <subcellularLocation>
        <location evidence="1">Cytoplasm</location>
    </subcellularLocation>
</comment>
<comment type="similarity">
    <text evidence="1">Belongs to the endoribonuclease YbeY family.</text>
</comment>
<feature type="chain" id="PRO_0000336014" description="Endoribonuclease YbeY">
    <location>
        <begin position="1"/>
        <end position="155"/>
    </location>
</feature>
<feature type="binding site" evidence="1">
    <location>
        <position position="115"/>
    </location>
    <ligand>
        <name>Zn(2+)</name>
        <dbReference type="ChEBI" id="CHEBI:29105"/>
        <note>catalytic</note>
    </ligand>
</feature>
<feature type="binding site" evidence="1">
    <location>
        <position position="119"/>
    </location>
    <ligand>
        <name>Zn(2+)</name>
        <dbReference type="ChEBI" id="CHEBI:29105"/>
        <note>catalytic</note>
    </ligand>
</feature>
<feature type="binding site" evidence="1">
    <location>
        <position position="125"/>
    </location>
    <ligand>
        <name>Zn(2+)</name>
        <dbReference type="ChEBI" id="CHEBI:29105"/>
        <note>catalytic</note>
    </ligand>
</feature>
<gene>
    <name evidence="1" type="primary">ybeY</name>
    <name type="ordered locus">Pnuc_1860</name>
</gene>
<accession>A4T008</accession>
<reference key="1">
    <citation type="journal article" date="2012" name="Stand. Genomic Sci.">
        <title>Complete genome sequence of Polynucleobacter necessarius subsp. asymbioticus type strain (QLW-P1DMWA-1(T)).</title>
        <authorList>
            <person name="Meincke L."/>
            <person name="Copeland A."/>
            <person name="Lapidus A."/>
            <person name="Lucas S."/>
            <person name="Berry K.W."/>
            <person name="Del Rio T.G."/>
            <person name="Hammon N."/>
            <person name="Dalin E."/>
            <person name="Tice H."/>
            <person name="Pitluck S."/>
            <person name="Richardson P."/>
            <person name="Bruce D."/>
            <person name="Goodwin L."/>
            <person name="Han C."/>
            <person name="Tapia R."/>
            <person name="Detter J.C."/>
            <person name="Schmutz J."/>
            <person name="Brettin T."/>
            <person name="Larimer F."/>
            <person name="Land M."/>
            <person name="Hauser L."/>
            <person name="Kyrpides N.C."/>
            <person name="Ivanova N."/>
            <person name="Goker M."/>
            <person name="Woyke T."/>
            <person name="Wu Q.L."/>
            <person name="Pockl M."/>
            <person name="Hahn M.W."/>
            <person name="Klenk H.P."/>
        </authorList>
    </citation>
    <scope>NUCLEOTIDE SEQUENCE [LARGE SCALE GENOMIC DNA]</scope>
    <source>
        <strain>DSM 18221 / CIP 109841 / QLW-P1DMWA-1</strain>
    </source>
</reference>
<protein>
    <recommendedName>
        <fullName evidence="1">Endoribonuclease YbeY</fullName>
        <ecNumber evidence="1">3.1.-.-</ecNumber>
    </recommendedName>
</protein>
<dbReference type="EC" id="3.1.-.-" evidence="1"/>
<dbReference type="EMBL" id="CP000655">
    <property type="protein sequence ID" value="ABP35072.1"/>
    <property type="molecule type" value="Genomic_DNA"/>
</dbReference>
<dbReference type="RefSeq" id="WP_011903695.1">
    <property type="nucleotide sequence ID" value="NC_009379.1"/>
</dbReference>
<dbReference type="SMR" id="A4T008"/>
<dbReference type="GeneID" id="31482250"/>
<dbReference type="KEGG" id="pnu:Pnuc_1860"/>
<dbReference type="eggNOG" id="COG0319">
    <property type="taxonomic scope" value="Bacteria"/>
</dbReference>
<dbReference type="HOGENOM" id="CLU_106710_0_1_4"/>
<dbReference type="Proteomes" id="UP000000231">
    <property type="component" value="Chromosome"/>
</dbReference>
<dbReference type="GO" id="GO:0005737">
    <property type="term" value="C:cytoplasm"/>
    <property type="evidence" value="ECO:0007669"/>
    <property type="project" value="UniProtKB-SubCell"/>
</dbReference>
<dbReference type="GO" id="GO:0004222">
    <property type="term" value="F:metalloendopeptidase activity"/>
    <property type="evidence" value="ECO:0007669"/>
    <property type="project" value="InterPro"/>
</dbReference>
<dbReference type="GO" id="GO:0004521">
    <property type="term" value="F:RNA endonuclease activity"/>
    <property type="evidence" value="ECO:0007669"/>
    <property type="project" value="UniProtKB-UniRule"/>
</dbReference>
<dbReference type="GO" id="GO:0008270">
    <property type="term" value="F:zinc ion binding"/>
    <property type="evidence" value="ECO:0007669"/>
    <property type="project" value="UniProtKB-UniRule"/>
</dbReference>
<dbReference type="GO" id="GO:0006364">
    <property type="term" value="P:rRNA processing"/>
    <property type="evidence" value="ECO:0007669"/>
    <property type="project" value="UniProtKB-UniRule"/>
</dbReference>
<dbReference type="Gene3D" id="3.40.390.30">
    <property type="entry name" value="Metalloproteases ('zincins'), catalytic domain"/>
    <property type="match status" value="1"/>
</dbReference>
<dbReference type="HAMAP" id="MF_00009">
    <property type="entry name" value="Endoribonucl_YbeY"/>
    <property type="match status" value="1"/>
</dbReference>
<dbReference type="InterPro" id="IPR023091">
    <property type="entry name" value="MetalPrtase_cat_dom_sf_prd"/>
</dbReference>
<dbReference type="InterPro" id="IPR002036">
    <property type="entry name" value="YbeY"/>
</dbReference>
<dbReference type="InterPro" id="IPR020549">
    <property type="entry name" value="YbeY_CS"/>
</dbReference>
<dbReference type="NCBIfam" id="TIGR00043">
    <property type="entry name" value="rRNA maturation RNase YbeY"/>
    <property type="match status" value="1"/>
</dbReference>
<dbReference type="PANTHER" id="PTHR46986">
    <property type="entry name" value="ENDORIBONUCLEASE YBEY, CHLOROPLASTIC"/>
    <property type="match status" value="1"/>
</dbReference>
<dbReference type="PANTHER" id="PTHR46986:SF1">
    <property type="entry name" value="ENDORIBONUCLEASE YBEY, CHLOROPLASTIC"/>
    <property type="match status" value="1"/>
</dbReference>
<dbReference type="Pfam" id="PF02130">
    <property type="entry name" value="YbeY"/>
    <property type="match status" value="1"/>
</dbReference>
<dbReference type="SUPFAM" id="SSF55486">
    <property type="entry name" value="Metalloproteases ('zincins'), catalytic domain"/>
    <property type="match status" value="1"/>
</dbReference>
<dbReference type="PROSITE" id="PS01306">
    <property type="entry name" value="UPF0054"/>
    <property type="match status" value="1"/>
</dbReference>
<name>YBEY_POLAQ</name>
<evidence type="ECO:0000255" key="1">
    <source>
        <dbReference type="HAMAP-Rule" id="MF_00009"/>
    </source>
</evidence>